<feature type="chain" id="PRO_0000315110" description="UDP-N-acetylglucosamine--N-acetylmuramyl-(pentapeptide) pyrophosphoryl-undecaprenol N-acetylglucosamine transferase">
    <location>
        <begin position="1"/>
        <end position="358"/>
    </location>
</feature>
<feature type="binding site" evidence="1">
    <location>
        <begin position="11"/>
        <end position="13"/>
    </location>
    <ligand>
        <name>UDP-N-acetyl-alpha-D-glucosamine</name>
        <dbReference type="ChEBI" id="CHEBI:57705"/>
    </ligand>
</feature>
<feature type="binding site" evidence="1">
    <location>
        <position position="124"/>
    </location>
    <ligand>
        <name>UDP-N-acetyl-alpha-D-glucosamine</name>
        <dbReference type="ChEBI" id="CHEBI:57705"/>
    </ligand>
</feature>
<feature type="binding site" evidence="1">
    <location>
        <position position="164"/>
    </location>
    <ligand>
        <name>UDP-N-acetyl-alpha-D-glucosamine</name>
        <dbReference type="ChEBI" id="CHEBI:57705"/>
    </ligand>
</feature>
<feature type="binding site" evidence="1">
    <location>
        <position position="195"/>
    </location>
    <ligand>
        <name>UDP-N-acetyl-alpha-D-glucosamine</name>
        <dbReference type="ChEBI" id="CHEBI:57705"/>
    </ligand>
</feature>
<feature type="binding site" evidence="1">
    <location>
        <position position="291"/>
    </location>
    <ligand>
        <name>UDP-N-acetyl-alpha-D-glucosamine</name>
        <dbReference type="ChEBI" id="CHEBI:57705"/>
    </ligand>
</feature>
<dbReference type="EC" id="2.4.1.227" evidence="1"/>
<dbReference type="EMBL" id="AE010300">
    <property type="protein sequence ID" value="AAN49249.1"/>
    <property type="molecule type" value="Genomic_DNA"/>
</dbReference>
<dbReference type="RefSeq" id="NP_712231.1">
    <property type="nucleotide sequence ID" value="NC_004342.2"/>
</dbReference>
<dbReference type="RefSeq" id="WP_000836517.1">
    <property type="nucleotide sequence ID" value="NC_004342.2"/>
</dbReference>
<dbReference type="SMR" id="Q8F4J1"/>
<dbReference type="FunCoup" id="Q8F4J1">
    <property type="interactions" value="259"/>
</dbReference>
<dbReference type="STRING" id="189518.LA_2050"/>
<dbReference type="CAZy" id="GT28">
    <property type="family name" value="Glycosyltransferase Family 28"/>
</dbReference>
<dbReference type="PaxDb" id="189518-LA_2050"/>
<dbReference type="EnsemblBacteria" id="AAN49249">
    <property type="protein sequence ID" value="AAN49249"/>
    <property type="gene ID" value="LA_2050"/>
</dbReference>
<dbReference type="KEGG" id="lil:LA_2050"/>
<dbReference type="PATRIC" id="fig|189518.3.peg.2046"/>
<dbReference type="HOGENOM" id="CLU_037404_2_1_12"/>
<dbReference type="InParanoid" id="Q8F4J1"/>
<dbReference type="OrthoDB" id="9808936at2"/>
<dbReference type="UniPathway" id="UPA00219"/>
<dbReference type="Proteomes" id="UP000001408">
    <property type="component" value="Chromosome I"/>
</dbReference>
<dbReference type="GO" id="GO:0005886">
    <property type="term" value="C:plasma membrane"/>
    <property type="evidence" value="ECO:0007669"/>
    <property type="project" value="UniProtKB-SubCell"/>
</dbReference>
<dbReference type="GO" id="GO:0016757">
    <property type="term" value="F:glycosyltransferase activity"/>
    <property type="evidence" value="ECO:0000318"/>
    <property type="project" value="GO_Central"/>
</dbReference>
<dbReference type="GO" id="GO:0051991">
    <property type="term" value="F:UDP-N-acetyl-D-glucosamine:N-acetylmuramoyl-L-alanyl-D-glutamyl-meso-2,6-diaminopimelyl-D-alanyl-D-alanine-diphosphoundecaprenol 4-beta-N-acetylglucosaminlytransferase activity"/>
    <property type="evidence" value="ECO:0007669"/>
    <property type="project" value="RHEA"/>
</dbReference>
<dbReference type="GO" id="GO:0050511">
    <property type="term" value="F:undecaprenyldiphospho-muramoylpentapeptide beta-N-acetylglucosaminyltransferase activity"/>
    <property type="evidence" value="ECO:0007669"/>
    <property type="project" value="UniProtKB-UniRule"/>
</dbReference>
<dbReference type="GO" id="GO:0005975">
    <property type="term" value="P:carbohydrate metabolic process"/>
    <property type="evidence" value="ECO:0007669"/>
    <property type="project" value="InterPro"/>
</dbReference>
<dbReference type="GO" id="GO:0051301">
    <property type="term" value="P:cell division"/>
    <property type="evidence" value="ECO:0007669"/>
    <property type="project" value="UniProtKB-KW"/>
</dbReference>
<dbReference type="GO" id="GO:0071555">
    <property type="term" value="P:cell wall organization"/>
    <property type="evidence" value="ECO:0007669"/>
    <property type="project" value="UniProtKB-KW"/>
</dbReference>
<dbReference type="GO" id="GO:0030259">
    <property type="term" value="P:lipid glycosylation"/>
    <property type="evidence" value="ECO:0007669"/>
    <property type="project" value="UniProtKB-UniRule"/>
</dbReference>
<dbReference type="GO" id="GO:0009252">
    <property type="term" value="P:peptidoglycan biosynthetic process"/>
    <property type="evidence" value="ECO:0007669"/>
    <property type="project" value="UniProtKB-UniRule"/>
</dbReference>
<dbReference type="GO" id="GO:0008360">
    <property type="term" value="P:regulation of cell shape"/>
    <property type="evidence" value="ECO:0007669"/>
    <property type="project" value="UniProtKB-KW"/>
</dbReference>
<dbReference type="CDD" id="cd03785">
    <property type="entry name" value="GT28_MurG"/>
    <property type="match status" value="1"/>
</dbReference>
<dbReference type="Gene3D" id="3.40.50.2000">
    <property type="entry name" value="Glycogen Phosphorylase B"/>
    <property type="match status" value="2"/>
</dbReference>
<dbReference type="HAMAP" id="MF_00033">
    <property type="entry name" value="MurG"/>
    <property type="match status" value="1"/>
</dbReference>
<dbReference type="InterPro" id="IPR006009">
    <property type="entry name" value="GlcNAc_MurG"/>
</dbReference>
<dbReference type="InterPro" id="IPR007235">
    <property type="entry name" value="Glyco_trans_28_C"/>
</dbReference>
<dbReference type="InterPro" id="IPR004276">
    <property type="entry name" value="GlycoTrans_28_N"/>
</dbReference>
<dbReference type="PANTHER" id="PTHR21015:SF22">
    <property type="entry name" value="GLYCOSYLTRANSFERASE"/>
    <property type="match status" value="1"/>
</dbReference>
<dbReference type="PANTHER" id="PTHR21015">
    <property type="entry name" value="UDP-N-ACETYLGLUCOSAMINE--N-ACETYLMURAMYL-(PENTAPEPTIDE) PYROPHOSPHORYL-UNDECAPRENOL N-ACETYLGLUCOSAMINE TRANSFERASE 1"/>
    <property type="match status" value="1"/>
</dbReference>
<dbReference type="Pfam" id="PF04101">
    <property type="entry name" value="Glyco_tran_28_C"/>
    <property type="match status" value="1"/>
</dbReference>
<dbReference type="Pfam" id="PF03033">
    <property type="entry name" value="Glyco_transf_28"/>
    <property type="match status" value="1"/>
</dbReference>
<dbReference type="SUPFAM" id="SSF53756">
    <property type="entry name" value="UDP-Glycosyltransferase/glycogen phosphorylase"/>
    <property type="match status" value="1"/>
</dbReference>
<evidence type="ECO:0000255" key="1">
    <source>
        <dbReference type="HAMAP-Rule" id="MF_00033"/>
    </source>
</evidence>
<organism>
    <name type="scientific">Leptospira interrogans serogroup Icterohaemorrhagiae serovar Lai (strain 56601)</name>
    <dbReference type="NCBI Taxonomy" id="189518"/>
    <lineage>
        <taxon>Bacteria</taxon>
        <taxon>Pseudomonadati</taxon>
        <taxon>Spirochaetota</taxon>
        <taxon>Spirochaetia</taxon>
        <taxon>Leptospirales</taxon>
        <taxon>Leptospiraceae</taxon>
        <taxon>Leptospira</taxon>
    </lineage>
</organism>
<protein>
    <recommendedName>
        <fullName evidence="1">UDP-N-acetylglucosamine--N-acetylmuramyl-(pentapeptide) pyrophosphoryl-undecaprenol N-acetylglucosamine transferase</fullName>
        <ecNumber evidence="1">2.4.1.227</ecNumber>
    </recommendedName>
    <alternativeName>
        <fullName evidence="1">Undecaprenyl-PP-MurNAc-pentapeptide-UDPGlcNAc GlcNAc transferase</fullName>
    </alternativeName>
</protein>
<proteinExistence type="inferred from homology"/>
<sequence>MKSIVIVAGGTGGHISPGVALAEVLTELKEKIGYENLYLYSLVRNKNNPDLEQAPCPVLWHNLPPLSSNFFLFPIRYTIQIIKTFFIFKKLNIDVVIGMGGYSTVSSILYGIFFRKKIYLCEQNTIPGNVNRLFFRFASKVAFSLPPKNSKIPCDYQVLGNPLRKKTIPKMSLKFFEKYDTKKKKQFNVLVMGGSQGARQINNIVIALMSHEEINKQFRFRVLTGSALYEEVSKKSKKDAELISYSDNMKEHYEWANFVIARSGSGVLSECAAFALPMILIPYPYAKDDHQMANAKYFELNGAAIVVDQKDEDESHLFRVLDQMANDVNLLNDMSISSLECSHVDASKDTAKYFFSLD</sequence>
<gene>
    <name evidence="1" type="primary">murG</name>
    <name type="ordered locus">LA_2050</name>
</gene>
<accession>Q8F4J1</accession>
<reference key="1">
    <citation type="journal article" date="2003" name="Nature">
        <title>Unique physiological and pathogenic features of Leptospira interrogans revealed by whole-genome sequencing.</title>
        <authorList>
            <person name="Ren S.-X."/>
            <person name="Fu G."/>
            <person name="Jiang X.-G."/>
            <person name="Zeng R."/>
            <person name="Miao Y.-G."/>
            <person name="Xu H."/>
            <person name="Zhang Y.-X."/>
            <person name="Xiong H."/>
            <person name="Lu G."/>
            <person name="Lu L.-F."/>
            <person name="Jiang H.-Q."/>
            <person name="Jia J."/>
            <person name="Tu Y.-F."/>
            <person name="Jiang J.-X."/>
            <person name="Gu W.-Y."/>
            <person name="Zhang Y.-Q."/>
            <person name="Cai Z."/>
            <person name="Sheng H.-H."/>
            <person name="Yin H.-F."/>
            <person name="Zhang Y."/>
            <person name="Zhu G.-F."/>
            <person name="Wan M."/>
            <person name="Huang H.-L."/>
            <person name="Qian Z."/>
            <person name="Wang S.-Y."/>
            <person name="Ma W."/>
            <person name="Yao Z.-J."/>
            <person name="Shen Y."/>
            <person name="Qiang B.-Q."/>
            <person name="Xia Q.-C."/>
            <person name="Guo X.-K."/>
            <person name="Danchin A."/>
            <person name="Saint Girons I."/>
            <person name="Somerville R.L."/>
            <person name="Wen Y.-M."/>
            <person name="Shi M.-H."/>
            <person name="Chen Z."/>
            <person name="Xu J.-G."/>
            <person name="Zhao G.-P."/>
        </authorList>
    </citation>
    <scope>NUCLEOTIDE SEQUENCE [LARGE SCALE GENOMIC DNA]</scope>
    <source>
        <strain>56601</strain>
    </source>
</reference>
<comment type="function">
    <text evidence="1">Cell wall formation. Catalyzes the transfer of a GlcNAc subunit on undecaprenyl-pyrophosphoryl-MurNAc-pentapeptide (lipid intermediate I) to form undecaprenyl-pyrophosphoryl-MurNAc-(pentapeptide)GlcNAc (lipid intermediate II).</text>
</comment>
<comment type="catalytic activity">
    <reaction evidence="1">
        <text>di-trans,octa-cis-undecaprenyl diphospho-N-acetyl-alpha-D-muramoyl-L-alanyl-D-glutamyl-meso-2,6-diaminopimeloyl-D-alanyl-D-alanine + UDP-N-acetyl-alpha-D-glucosamine = di-trans,octa-cis-undecaprenyl diphospho-[N-acetyl-alpha-D-glucosaminyl-(1-&gt;4)]-N-acetyl-alpha-D-muramoyl-L-alanyl-D-glutamyl-meso-2,6-diaminopimeloyl-D-alanyl-D-alanine + UDP + H(+)</text>
        <dbReference type="Rhea" id="RHEA:31227"/>
        <dbReference type="ChEBI" id="CHEBI:15378"/>
        <dbReference type="ChEBI" id="CHEBI:57705"/>
        <dbReference type="ChEBI" id="CHEBI:58223"/>
        <dbReference type="ChEBI" id="CHEBI:61387"/>
        <dbReference type="ChEBI" id="CHEBI:61388"/>
        <dbReference type="EC" id="2.4.1.227"/>
    </reaction>
</comment>
<comment type="pathway">
    <text evidence="1">Cell wall biogenesis; peptidoglycan biosynthesis.</text>
</comment>
<comment type="subcellular location">
    <subcellularLocation>
        <location evidence="1">Cell inner membrane</location>
        <topology evidence="1">Peripheral membrane protein</topology>
        <orientation evidence="1">Cytoplasmic side</orientation>
    </subcellularLocation>
</comment>
<comment type="similarity">
    <text evidence="1">Belongs to the glycosyltransferase 28 family. MurG subfamily.</text>
</comment>
<keyword id="KW-0131">Cell cycle</keyword>
<keyword id="KW-0132">Cell division</keyword>
<keyword id="KW-0997">Cell inner membrane</keyword>
<keyword id="KW-1003">Cell membrane</keyword>
<keyword id="KW-0133">Cell shape</keyword>
<keyword id="KW-0961">Cell wall biogenesis/degradation</keyword>
<keyword id="KW-0328">Glycosyltransferase</keyword>
<keyword id="KW-0472">Membrane</keyword>
<keyword id="KW-0573">Peptidoglycan synthesis</keyword>
<keyword id="KW-1185">Reference proteome</keyword>
<keyword id="KW-0808">Transferase</keyword>
<name>MURG_LEPIN</name>